<organism>
    <name type="scientific">Salmonella typhimurium (strain LT2 / SGSC1412 / ATCC 700720)</name>
    <dbReference type="NCBI Taxonomy" id="99287"/>
    <lineage>
        <taxon>Bacteria</taxon>
        <taxon>Pseudomonadati</taxon>
        <taxon>Pseudomonadota</taxon>
        <taxon>Gammaproteobacteria</taxon>
        <taxon>Enterobacterales</taxon>
        <taxon>Enterobacteriaceae</taxon>
        <taxon>Salmonella</taxon>
    </lineage>
</organism>
<dbReference type="EC" id="2.1.1.170" evidence="1"/>
<dbReference type="EMBL" id="AE006468">
    <property type="protein sequence ID" value="AAL22731.1"/>
    <property type="molecule type" value="Genomic_DNA"/>
</dbReference>
<dbReference type="RefSeq" id="WP_001519938.1">
    <property type="nucleotide sequence ID" value="NC_003197.2"/>
</dbReference>
<dbReference type="SMR" id="P64237"/>
<dbReference type="STRING" id="99287.STM3873"/>
<dbReference type="PaxDb" id="99287-STM3873"/>
<dbReference type="KEGG" id="stm:STM3873"/>
<dbReference type="PATRIC" id="fig|99287.12.peg.4103"/>
<dbReference type="HOGENOM" id="CLU_065341_2_2_6"/>
<dbReference type="PhylomeDB" id="P64237"/>
<dbReference type="BioCyc" id="SENT99287:STM3873-MONOMER"/>
<dbReference type="Proteomes" id="UP000001014">
    <property type="component" value="Chromosome"/>
</dbReference>
<dbReference type="GO" id="GO:0005829">
    <property type="term" value="C:cytosol"/>
    <property type="evidence" value="ECO:0000318"/>
    <property type="project" value="GO_Central"/>
</dbReference>
<dbReference type="GO" id="GO:0070043">
    <property type="term" value="F:rRNA (guanine-N7-)-methyltransferase activity"/>
    <property type="evidence" value="ECO:0000318"/>
    <property type="project" value="GO_Central"/>
</dbReference>
<dbReference type="CDD" id="cd02440">
    <property type="entry name" value="AdoMet_MTases"/>
    <property type="match status" value="1"/>
</dbReference>
<dbReference type="FunFam" id="3.40.50.150:FF:000032">
    <property type="entry name" value="Ribosomal RNA small subunit methyltransferase G"/>
    <property type="match status" value="1"/>
</dbReference>
<dbReference type="Gene3D" id="3.40.50.150">
    <property type="entry name" value="Vaccinia Virus protein VP39"/>
    <property type="match status" value="1"/>
</dbReference>
<dbReference type="HAMAP" id="MF_00074">
    <property type="entry name" value="16SrRNA_methyltr_G"/>
    <property type="match status" value="1"/>
</dbReference>
<dbReference type="InterPro" id="IPR003682">
    <property type="entry name" value="rRNA_ssu_MeTfrase_G"/>
</dbReference>
<dbReference type="InterPro" id="IPR029063">
    <property type="entry name" value="SAM-dependent_MTases_sf"/>
</dbReference>
<dbReference type="NCBIfam" id="TIGR00138">
    <property type="entry name" value="rsmG_gidB"/>
    <property type="match status" value="1"/>
</dbReference>
<dbReference type="PANTHER" id="PTHR31760">
    <property type="entry name" value="S-ADENOSYL-L-METHIONINE-DEPENDENT METHYLTRANSFERASES SUPERFAMILY PROTEIN"/>
    <property type="match status" value="1"/>
</dbReference>
<dbReference type="PANTHER" id="PTHR31760:SF0">
    <property type="entry name" value="S-ADENOSYL-L-METHIONINE-DEPENDENT METHYLTRANSFERASES SUPERFAMILY PROTEIN"/>
    <property type="match status" value="1"/>
</dbReference>
<dbReference type="Pfam" id="PF02527">
    <property type="entry name" value="GidB"/>
    <property type="match status" value="1"/>
</dbReference>
<dbReference type="PIRSF" id="PIRSF003078">
    <property type="entry name" value="GidB"/>
    <property type="match status" value="1"/>
</dbReference>
<dbReference type="SUPFAM" id="SSF53335">
    <property type="entry name" value="S-adenosyl-L-methionine-dependent methyltransferases"/>
    <property type="match status" value="1"/>
</dbReference>
<sequence length="207" mass="23175">MLNKLSRLLADAGISLTDHQKTLLVAYVDMLHKWNKAYNLTSVRDPNEMLVRHILDSIVVAPYLQGQRFIDVGTGPGLPGIPLAIVLPDAHFTLLDSLGKRVRFLRQVQHELKLENITPVQSRVEAYPSEPPFDGVISRAFASLNDMVSWCHHLPGEKGRFYALKGQLPGDEIASLPDNFSVESVEKLRVPQLEGERHLVIIKSNKV</sequence>
<gene>
    <name evidence="1" type="primary">rsmG</name>
    <name type="ordered locus">STM3873</name>
</gene>
<feature type="chain" id="PRO_0000184324" description="Ribosomal RNA small subunit methyltransferase G">
    <location>
        <begin position="1"/>
        <end position="207"/>
    </location>
</feature>
<feature type="binding site" evidence="1">
    <location>
        <position position="73"/>
    </location>
    <ligand>
        <name>S-adenosyl-L-methionine</name>
        <dbReference type="ChEBI" id="CHEBI:59789"/>
    </ligand>
</feature>
<feature type="binding site" evidence="1">
    <location>
        <position position="78"/>
    </location>
    <ligand>
        <name>S-adenosyl-L-methionine</name>
        <dbReference type="ChEBI" id="CHEBI:59789"/>
    </ligand>
</feature>
<feature type="binding site" evidence="1">
    <location>
        <begin position="124"/>
        <end position="125"/>
    </location>
    <ligand>
        <name>S-adenosyl-L-methionine</name>
        <dbReference type="ChEBI" id="CHEBI:59789"/>
    </ligand>
</feature>
<feature type="binding site" evidence="1">
    <location>
        <position position="139"/>
    </location>
    <ligand>
        <name>S-adenosyl-L-methionine</name>
        <dbReference type="ChEBI" id="CHEBI:59789"/>
    </ligand>
</feature>
<feature type="mutagenesis site" description="Low level streptomycin and spectinomycin resistance." evidence="2">
    <original>D</original>
    <variation>A</variation>
    <location>
        <position position="56"/>
    </location>
</feature>
<accession>P64237</accession>
<accession>Q8XFW0</accession>
<name>RSMG_SALTY</name>
<evidence type="ECO:0000255" key="1">
    <source>
        <dbReference type="HAMAP-Rule" id="MF_00074"/>
    </source>
</evidence>
<evidence type="ECO:0000269" key="2">
    <source>
    </source>
</evidence>
<comment type="function">
    <text evidence="1">Specifically methylates the N7 position of guanine in position 527 of 16S rRNA.</text>
</comment>
<comment type="catalytic activity">
    <reaction evidence="1">
        <text>guanosine(527) in 16S rRNA + S-adenosyl-L-methionine = N(7)-methylguanosine(527) in 16S rRNA + S-adenosyl-L-homocysteine</text>
        <dbReference type="Rhea" id="RHEA:42732"/>
        <dbReference type="Rhea" id="RHEA-COMP:10209"/>
        <dbReference type="Rhea" id="RHEA-COMP:10210"/>
        <dbReference type="ChEBI" id="CHEBI:57856"/>
        <dbReference type="ChEBI" id="CHEBI:59789"/>
        <dbReference type="ChEBI" id="CHEBI:74269"/>
        <dbReference type="ChEBI" id="CHEBI:74480"/>
        <dbReference type="EC" id="2.1.1.170"/>
    </reaction>
</comment>
<comment type="subcellular location">
    <subcellularLocation>
        <location evidence="1">Cytoplasm</location>
    </subcellularLocation>
</comment>
<comment type="miscellaneous">
    <text evidence="2">A mutant in which deletion of the last 50 residues in ubiA is combined with the Tyr-56 mutation in rsmG is highly resistant to streptomycin and has a small colony phenotype (which grow slowly and are resistant to aminoglycoside anitbiotics).</text>
</comment>
<comment type="similarity">
    <text evidence="1">Belongs to the methyltransferase superfamily. RNA methyltransferase RsmG family.</text>
</comment>
<reference key="1">
    <citation type="journal article" date="2001" name="Nature">
        <title>Complete genome sequence of Salmonella enterica serovar Typhimurium LT2.</title>
        <authorList>
            <person name="McClelland M."/>
            <person name="Sanderson K.E."/>
            <person name="Spieth J."/>
            <person name="Clifton S.W."/>
            <person name="Latreille P."/>
            <person name="Courtney L."/>
            <person name="Porwollik S."/>
            <person name="Ali J."/>
            <person name="Dante M."/>
            <person name="Du F."/>
            <person name="Hou S."/>
            <person name="Layman D."/>
            <person name="Leonard S."/>
            <person name="Nguyen C."/>
            <person name="Scott K."/>
            <person name="Holmes A."/>
            <person name="Grewal N."/>
            <person name="Mulvaney E."/>
            <person name="Ryan E."/>
            <person name="Sun H."/>
            <person name="Florea L."/>
            <person name="Miller W."/>
            <person name="Stoneking T."/>
            <person name="Nhan M."/>
            <person name="Waterston R."/>
            <person name="Wilson R.K."/>
        </authorList>
    </citation>
    <scope>NUCLEOTIDE SEQUENCE [LARGE SCALE GENOMIC DNA]</scope>
    <source>
        <strain>LT2 / SGSC1412 / ATCC 700720</strain>
    </source>
</reference>
<reference key="2">
    <citation type="journal article" date="2011" name="Mol. Microbiol.">
        <title>Activation of cryptic aminoglycoside resistance in Salmonella enterica.</title>
        <authorList>
            <person name="Koskiniemi S."/>
            <person name="Praenting M."/>
            <person name="Gullberg E."/>
            <person name="Naesvall J."/>
            <person name="Andersson D.I."/>
        </authorList>
    </citation>
    <scope>MUTAGENESIS OF ASP-56</scope>
    <source>
        <strain>LT2 / SGSC1412 / ATCC 700720</strain>
    </source>
</reference>
<proteinExistence type="evidence at protein level"/>
<keyword id="KW-0963">Cytoplasm</keyword>
<keyword id="KW-0489">Methyltransferase</keyword>
<keyword id="KW-1185">Reference proteome</keyword>
<keyword id="KW-0698">rRNA processing</keyword>
<keyword id="KW-0949">S-adenosyl-L-methionine</keyword>
<keyword id="KW-0808">Transferase</keyword>
<protein>
    <recommendedName>
        <fullName evidence="1">Ribosomal RNA small subunit methyltransferase G</fullName>
        <ecNumber evidence="1">2.1.1.170</ecNumber>
    </recommendedName>
    <alternativeName>
        <fullName evidence="1">16S rRNA 7-methylguanosine methyltransferase</fullName>
        <shortName evidence="1">16S rRNA m7G methyltransferase</shortName>
    </alternativeName>
</protein>